<protein>
    <recommendedName>
        <fullName evidence="1">UPF0303 protein BCQ_3199</fullName>
    </recommendedName>
</protein>
<sequence length="158" mass="17900">MSSSNLNEISKQILKEEETLQFSSFTNEDALQIGLFIVETAKREGKLIAVDITKNGVQLFHFKMTGTNAENTKWIERKKRVVSLHDRSSYYMQIQSEITGISYNEKYLLDTSEYAAFGGCFPIRIKNVGVIGMITVSGLPPEEDHELVVRAVKNHLNQ</sequence>
<feature type="chain" id="PRO_1000148415" description="UPF0303 protein BCQ_3199">
    <location>
        <begin position="1"/>
        <end position="158"/>
    </location>
</feature>
<reference key="1">
    <citation type="journal article" date="2009" name="J. Bacteriol.">
        <title>Complete genome sequence of the extremophilic Bacillus cereus strain Q1 with industrial applications.</title>
        <authorList>
            <person name="Xiong Z."/>
            <person name="Jiang Y."/>
            <person name="Qi D."/>
            <person name="Lu H."/>
            <person name="Yang F."/>
            <person name="Yang J."/>
            <person name="Chen L."/>
            <person name="Sun L."/>
            <person name="Xu X."/>
            <person name="Xue Y."/>
            <person name="Zhu Y."/>
            <person name="Jin Q."/>
        </authorList>
    </citation>
    <scope>NUCLEOTIDE SEQUENCE [LARGE SCALE GENOMIC DNA]</scope>
    <source>
        <strain>Q1</strain>
    </source>
</reference>
<comment type="similarity">
    <text evidence="1">Belongs to the UPF0303 family.</text>
</comment>
<gene>
    <name type="ordered locus">BCQ_3199</name>
</gene>
<accession>B9ISQ6</accession>
<organism>
    <name type="scientific">Bacillus cereus (strain Q1)</name>
    <dbReference type="NCBI Taxonomy" id="361100"/>
    <lineage>
        <taxon>Bacteria</taxon>
        <taxon>Bacillati</taxon>
        <taxon>Bacillota</taxon>
        <taxon>Bacilli</taxon>
        <taxon>Bacillales</taxon>
        <taxon>Bacillaceae</taxon>
        <taxon>Bacillus</taxon>
        <taxon>Bacillus cereus group</taxon>
    </lineage>
</organism>
<proteinExistence type="inferred from homology"/>
<dbReference type="EMBL" id="CP000227">
    <property type="protein sequence ID" value="ACM13627.1"/>
    <property type="molecule type" value="Genomic_DNA"/>
</dbReference>
<dbReference type="SMR" id="B9ISQ6"/>
<dbReference type="KEGG" id="bcq:BCQ_3199"/>
<dbReference type="HOGENOM" id="CLU_101036_2_0_9"/>
<dbReference type="Proteomes" id="UP000000441">
    <property type="component" value="Chromosome"/>
</dbReference>
<dbReference type="FunFam" id="3.30.450.150:FF:000002">
    <property type="entry name" value="UPF0303 protein BCAH820_3413"/>
    <property type="match status" value="1"/>
</dbReference>
<dbReference type="Gene3D" id="3.30.450.150">
    <property type="entry name" value="Haem-degrading domain"/>
    <property type="match status" value="1"/>
</dbReference>
<dbReference type="HAMAP" id="MF_00761">
    <property type="entry name" value="UPF0303"/>
    <property type="match status" value="1"/>
</dbReference>
<dbReference type="InterPro" id="IPR005624">
    <property type="entry name" value="PduO/GlcC-like"/>
</dbReference>
<dbReference type="InterPro" id="IPR038084">
    <property type="entry name" value="PduO/GlcC-like_sf"/>
</dbReference>
<dbReference type="InterPro" id="IPR010371">
    <property type="entry name" value="YBR137W-like"/>
</dbReference>
<dbReference type="NCBIfam" id="NF002692">
    <property type="entry name" value="PRK02487.1-1"/>
    <property type="match status" value="1"/>
</dbReference>
<dbReference type="NCBIfam" id="NF002696">
    <property type="entry name" value="PRK02487.1-5"/>
    <property type="match status" value="1"/>
</dbReference>
<dbReference type="PANTHER" id="PTHR28255">
    <property type="match status" value="1"/>
</dbReference>
<dbReference type="PANTHER" id="PTHR28255:SF1">
    <property type="entry name" value="UPF0303 PROTEIN YBR137W"/>
    <property type="match status" value="1"/>
</dbReference>
<dbReference type="Pfam" id="PF03928">
    <property type="entry name" value="HbpS-like"/>
    <property type="match status" value="1"/>
</dbReference>
<dbReference type="PIRSF" id="PIRSF008757">
    <property type="entry name" value="UCP008757"/>
    <property type="match status" value="1"/>
</dbReference>
<dbReference type="SUPFAM" id="SSF143744">
    <property type="entry name" value="GlcG-like"/>
    <property type="match status" value="1"/>
</dbReference>
<name>Y3199_BACCQ</name>
<evidence type="ECO:0000255" key="1">
    <source>
        <dbReference type="HAMAP-Rule" id="MF_00761"/>
    </source>
</evidence>